<evidence type="ECO:0000255" key="1">
    <source>
        <dbReference type="HAMAP-Rule" id="MF_00440"/>
    </source>
</evidence>
<evidence type="ECO:0000256" key="2">
    <source>
        <dbReference type="SAM" id="MobiDB-lite"/>
    </source>
</evidence>
<sequence>MRCPKCQSLKSSVIDSRQAEDGNTIRRRRSCDQCGQRFTTYERIEEKTLVVVKKDGTREQFSREKIFNGIIRSAQKRPVSTDDIDEVVNRIEQKVRAQGDSEIESDVIGNLVMEELVELDEITYVRFASVYRSFKDVGELENLLKQMISKGSKVKPGKKDETK</sequence>
<comment type="function">
    <text evidence="1">Negatively regulates transcription of bacterial ribonucleotide reductase nrd genes and operons by binding to NrdR-boxes.</text>
</comment>
<comment type="cofactor">
    <cofactor evidence="1">
        <name>Zn(2+)</name>
        <dbReference type="ChEBI" id="CHEBI:29105"/>
    </cofactor>
    <text evidence="1">Binds 1 zinc ion.</text>
</comment>
<comment type="similarity">
    <text evidence="1">Belongs to the NrdR family.</text>
</comment>
<accession>A4VX57</accession>
<keyword id="KW-0067">ATP-binding</keyword>
<keyword id="KW-0238">DNA-binding</keyword>
<keyword id="KW-0479">Metal-binding</keyword>
<keyword id="KW-0547">Nucleotide-binding</keyword>
<keyword id="KW-0678">Repressor</keyword>
<keyword id="KW-0804">Transcription</keyword>
<keyword id="KW-0805">Transcription regulation</keyword>
<keyword id="KW-0862">Zinc</keyword>
<keyword id="KW-0863">Zinc-finger</keyword>
<feature type="chain" id="PRO_1000080847" description="Transcriptional repressor NrdR">
    <location>
        <begin position="1"/>
        <end position="163"/>
    </location>
</feature>
<feature type="domain" description="ATP-cone" evidence="1">
    <location>
        <begin position="49"/>
        <end position="139"/>
    </location>
</feature>
<feature type="zinc finger region" evidence="1">
    <location>
        <begin position="3"/>
        <end position="34"/>
    </location>
</feature>
<feature type="region of interest" description="Disordered" evidence="2">
    <location>
        <begin position="1"/>
        <end position="22"/>
    </location>
</feature>
<gene>
    <name evidence="1" type="primary">nrdR</name>
    <name type="ordered locus">SSU05_1730</name>
</gene>
<organism>
    <name type="scientific">Streptococcus suis (strain 05ZYH33)</name>
    <dbReference type="NCBI Taxonomy" id="391295"/>
    <lineage>
        <taxon>Bacteria</taxon>
        <taxon>Bacillati</taxon>
        <taxon>Bacillota</taxon>
        <taxon>Bacilli</taxon>
        <taxon>Lactobacillales</taxon>
        <taxon>Streptococcaceae</taxon>
        <taxon>Streptococcus</taxon>
    </lineage>
</organism>
<proteinExistence type="inferred from homology"/>
<name>NRDR_STRSY</name>
<protein>
    <recommendedName>
        <fullName evidence="1">Transcriptional repressor NrdR</fullName>
    </recommendedName>
</protein>
<reference key="1">
    <citation type="journal article" date="2007" name="PLoS ONE">
        <title>A glimpse of streptococcal toxic shock syndrome from comparative genomics of S. suis 2 Chinese isolates.</title>
        <authorList>
            <person name="Chen C."/>
            <person name="Tang J."/>
            <person name="Dong W."/>
            <person name="Wang C."/>
            <person name="Feng Y."/>
            <person name="Wang J."/>
            <person name="Zheng F."/>
            <person name="Pan X."/>
            <person name="Liu D."/>
            <person name="Li M."/>
            <person name="Song Y."/>
            <person name="Zhu X."/>
            <person name="Sun H."/>
            <person name="Feng T."/>
            <person name="Guo Z."/>
            <person name="Ju A."/>
            <person name="Ge J."/>
            <person name="Dong Y."/>
            <person name="Sun W."/>
            <person name="Jiang Y."/>
            <person name="Wang J."/>
            <person name="Yan J."/>
            <person name="Yang H."/>
            <person name="Wang X."/>
            <person name="Gao G.F."/>
            <person name="Yang R."/>
            <person name="Wang J."/>
            <person name="Yu J."/>
        </authorList>
    </citation>
    <scope>NUCLEOTIDE SEQUENCE [LARGE SCALE GENOMIC DNA]</scope>
    <source>
        <strain>05ZYH33</strain>
    </source>
</reference>
<dbReference type="EMBL" id="CP000407">
    <property type="protein sequence ID" value="ABP90696.1"/>
    <property type="molecule type" value="Genomic_DNA"/>
</dbReference>
<dbReference type="SMR" id="A4VX57"/>
<dbReference type="STRING" id="391295.SSU05_1730"/>
<dbReference type="KEGG" id="ssu:SSU05_1730"/>
<dbReference type="eggNOG" id="COG1327">
    <property type="taxonomic scope" value="Bacteria"/>
</dbReference>
<dbReference type="HOGENOM" id="CLU_108412_0_0_9"/>
<dbReference type="GO" id="GO:0005524">
    <property type="term" value="F:ATP binding"/>
    <property type="evidence" value="ECO:0007669"/>
    <property type="project" value="UniProtKB-KW"/>
</dbReference>
<dbReference type="GO" id="GO:0003677">
    <property type="term" value="F:DNA binding"/>
    <property type="evidence" value="ECO:0007669"/>
    <property type="project" value="UniProtKB-KW"/>
</dbReference>
<dbReference type="GO" id="GO:0008270">
    <property type="term" value="F:zinc ion binding"/>
    <property type="evidence" value="ECO:0007669"/>
    <property type="project" value="UniProtKB-UniRule"/>
</dbReference>
<dbReference type="GO" id="GO:0045892">
    <property type="term" value="P:negative regulation of DNA-templated transcription"/>
    <property type="evidence" value="ECO:0007669"/>
    <property type="project" value="UniProtKB-UniRule"/>
</dbReference>
<dbReference type="HAMAP" id="MF_00440">
    <property type="entry name" value="NrdR"/>
    <property type="match status" value="1"/>
</dbReference>
<dbReference type="InterPro" id="IPR005144">
    <property type="entry name" value="ATP-cone_dom"/>
</dbReference>
<dbReference type="InterPro" id="IPR055173">
    <property type="entry name" value="NrdR-like_N"/>
</dbReference>
<dbReference type="InterPro" id="IPR003796">
    <property type="entry name" value="RNR_NrdR-like"/>
</dbReference>
<dbReference type="NCBIfam" id="TIGR00244">
    <property type="entry name" value="transcriptional regulator NrdR"/>
    <property type="match status" value="1"/>
</dbReference>
<dbReference type="PANTHER" id="PTHR30455">
    <property type="entry name" value="TRANSCRIPTIONAL REPRESSOR NRDR"/>
    <property type="match status" value="1"/>
</dbReference>
<dbReference type="PANTHER" id="PTHR30455:SF2">
    <property type="entry name" value="TRANSCRIPTIONAL REPRESSOR NRDR"/>
    <property type="match status" value="1"/>
</dbReference>
<dbReference type="Pfam" id="PF03477">
    <property type="entry name" value="ATP-cone"/>
    <property type="match status" value="1"/>
</dbReference>
<dbReference type="Pfam" id="PF22811">
    <property type="entry name" value="Zn_ribbon_NrdR"/>
    <property type="match status" value="1"/>
</dbReference>
<dbReference type="PROSITE" id="PS51161">
    <property type="entry name" value="ATP_CONE"/>
    <property type="match status" value="1"/>
</dbReference>